<comment type="function">
    <text evidence="1">Catalyzes the conversion of dethiobiotin (DTB) to biotin by the insertion of a sulfur atom into dethiobiotin via a radical-based mechanism.</text>
</comment>
<comment type="catalytic activity">
    <reaction evidence="1">
        <text>(4R,5S)-dethiobiotin + (sulfur carrier)-SH + 2 reduced [2Fe-2S]-[ferredoxin] + 2 S-adenosyl-L-methionine = (sulfur carrier)-H + biotin + 2 5'-deoxyadenosine + 2 L-methionine + 2 oxidized [2Fe-2S]-[ferredoxin]</text>
        <dbReference type="Rhea" id="RHEA:22060"/>
        <dbReference type="Rhea" id="RHEA-COMP:10000"/>
        <dbReference type="Rhea" id="RHEA-COMP:10001"/>
        <dbReference type="Rhea" id="RHEA-COMP:14737"/>
        <dbReference type="Rhea" id="RHEA-COMP:14739"/>
        <dbReference type="ChEBI" id="CHEBI:17319"/>
        <dbReference type="ChEBI" id="CHEBI:29917"/>
        <dbReference type="ChEBI" id="CHEBI:33737"/>
        <dbReference type="ChEBI" id="CHEBI:33738"/>
        <dbReference type="ChEBI" id="CHEBI:57586"/>
        <dbReference type="ChEBI" id="CHEBI:57844"/>
        <dbReference type="ChEBI" id="CHEBI:59789"/>
        <dbReference type="ChEBI" id="CHEBI:64428"/>
        <dbReference type="ChEBI" id="CHEBI:149473"/>
        <dbReference type="EC" id="2.8.1.6"/>
    </reaction>
</comment>
<comment type="cofactor">
    <cofactor evidence="1">
        <name>[4Fe-4S] cluster</name>
        <dbReference type="ChEBI" id="CHEBI:49883"/>
    </cofactor>
    <text evidence="1">Binds 1 [4Fe-4S] cluster. The cluster is coordinated with 3 cysteines and an exchangeable S-adenosyl-L-methionine.</text>
</comment>
<comment type="cofactor">
    <cofactor evidence="1">
        <name>[2Fe-2S] cluster</name>
        <dbReference type="ChEBI" id="CHEBI:190135"/>
    </cofactor>
    <text evidence="1">Binds 1 [2Fe-2S] cluster. The cluster is coordinated with 3 cysteines and 1 arginine.</text>
</comment>
<comment type="pathway">
    <text evidence="1">Cofactor biosynthesis; biotin biosynthesis; biotin from 7,8-diaminononanoate: step 2/2.</text>
</comment>
<comment type="subunit">
    <text evidence="1">Homodimer.</text>
</comment>
<comment type="similarity">
    <text evidence="1">Belongs to the radical SAM superfamily. Biotin synthase family.</text>
</comment>
<gene>
    <name evidence="1" type="primary">bioB</name>
    <name type="ordered locus">CC_3521</name>
</gene>
<sequence length="341" mass="36566">MSEITASPRHDWTLAEVEALFALPFMELVFQAANVHRAHFDPSEIQLSQLLSVKTGGCAENCGYCSQSAHFKTGLKADKLMAADDVVAKARAARDGGAQRFCMGAAWRELKDRDLPKLTEMIGEVKALGLETCATLGMLTADQAKALKAAGLDYYNHNLDTGPDYYKDVVTTRTYQERLDTLAHVRDAGMSTCCGGIVGMGEQRRDRAGLLHQLATLPAHPDSLPINGLVPISGTPLGDKVLSEGKAIDAIEFVRTIAVARIVCPKSMVRLSAGREGMSRELQALCFMAGANSIFVGGKLLTTPLPGQDEDSQLFQDLDLKPMGGAVRVEAKADAAMVAAE</sequence>
<reference key="1">
    <citation type="journal article" date="2001" name="Proc. Natl. Acad. Sci. U.S.A.">
        <title>Complete genome sequence of Caulobacter crescentus.</title>
        <authorList>
            <person name="Nierman W.C."/>
            <person name="Feldblyum T.V."/>
            <person name="Laub M.T."/>
            <person name="Paulsen I.T."/>
            <person name="Nelson K.E."/>
            <person name="Eisen J.A."/>
            <person name="Heidelberg J.F."/>
            <person name="Alley M.R.K."/>
            <person name="Ohta N."/>
            <person name="Maddock J.R."/>
            <person name="Potocka I."/>
            <person name="Nelson W.C."/>
            <person name="Newton A."/>
            <person name="Stephens C."/>
            <person name="Phadke N.D."/>
            <person name="Ely B."/>
            <person name="DeBoy R.T."/>
            <person name="Dodson R.J."/>
            <person name="Durkin A.S."/>
            <person name="Gwinn M.L."/>
            <person name="Haft D.H."/>
            <person name="Kolonay J.F."/>
            <person name="Smit J."/>
            <person name="Craven M.B."/>
            <person name="Khouri H.M."/>
            <person name="Shetty J."/>
            <person name="Berry K.J."/>
            <person name="Utterback T.R."/>
            <person name="Tran K."/>
            <person name="Wolf A.M."/>
            <person name="Vamathevan J.J."/>
            <person name="Ermolaeva M.D."/>
            <person name="White O."/>
            <person name="Salzberg S.L."/>
            <person name="Venter J.C."/>
            <person name="Shapiro L."/>
            <person name="Fraser C.M."/>
        </authorList>
    </citation>
    <scope>NUCLEOTIDE SEQUENCE [LARGE SCALE GENOMIC DNA]</scope>
    <source>
        <strain>ATCC 19089 / CIP 103742 / CB 15</strain>
    </source>
</reference>
<proteinExistence type="inferred from homology"/>
<feature type="chain" id="PRO_0000381292" description="Biotin synthase">
    <location>
        <begin position="1"/>
        <end position="341"/>
    </location>
</feature>
<feature type="domain" description="Radical SAM core" evidence="2">
    <location>
        <begin position="43"/>
        <end position="266"/>
    </location>
</feature>
<feature type="binding site" evidence="1">
    <location>
        <position position="58"/>
    </location>
    <ligand>
        <name>[4Fe-4S] cluster</name>
        <dbReference type="ChEBI" id="CHEBI:49883"/>
        <note>4Fe-4S-S-AdoMet</note>
    </ligand>
</feature>
<feature type="binding site" evidence="1">
    <location>
        <position position="62"/>
    </location>
    <ligand>
        <name>[4Fe-4S] cluster</name>
        <dbReference type="ChEBI" id="CHEBI:49883"/>
        <note>4Fe-4S-S-AdoMet</note>
    </ligand>
</feature>
<feature type="binding site" evidence="1">
    <location>
        <position position="65"/>
    </location>
    <ligand>
        <name>[4Fe-4S] cluster</name>
        <dbReference type="ChEBI" id="CHEBI:49883"/>
        <note>4Fe-4S-S-AdoMet</note>
    </ligand>
</feature>
<feature type="binding site" evidence="1">
    <location>
        <position position="102"/>
    </location>
    <ligand>
        <name>[2Fe-2S] cluster</name>
        <dbReference type="ChEBI" id="CHEBI:190135"/>
    </ligand>
</feature>
<feature type="binding site" evidence="1">
    <location>
        <position position="133"/>
    </location>
    <ligand>
        <name>[2Fe-2S] cluster</name>
        <dbReference type="ChEBI" id="CHEBI:190135"/>
    </ligand>
</feature>
<feature type="binding site" evidence="1">
    <location>
        <position position="193"/>
    </location>
    <ligand>
        <name>[2Fe-2S] cluster</name>
        <dbReference type="ChEBI" id="CHEBI:190135"/>
    </ligand>
</feature>
<feature type="binding site" evidence="1">
    <location>
        <position position="270"/>
    </location>
    <ligand>
        <name>[2Fe-2S] cluster</name>
        <dbReference type="ChEBI" id="CHEBI:190135"/>
    </ligand>
</feature>
<name>BIOB_CAUVC</name>
<protein>
    <recommendedName>
        <fullName evidence="1">Biotin synthase</fullName>
        <ecNumber evidence="1">2.8.1.6</ecNumber>
    </recommendedName>
</protein>
<dbReference type="EC" id="2.8.1.6" evidence="1"/>
<dbReference type="EMBL" id="AE005673">
    <property type="protein sequence ID" value="AAK25483.1"/>
    <property type="molecule type" value="Genomic_DNA"/>
</dbReference>
<dbReference type="PIR" id="G87685">
    <property type="entry name" value="G87685"/>
</dbReference>
<dbReference type="RefSeq" id="NP_422315.1">
    <property type="nucleotide sequence ID" value="NC_002696.2"/>
</dbReference>
<dbReference type="RefSeq" id="WP_010921350.1">
    <property type="nucleotide sequence ID" value="NC_002696.2"/>
</dbReference>
<dbReference type="SMR" id="Q9A2N5"/>
<dbReference type="STRING" id="190650.CC_3521"/>
<dbReference type="EnsemblBacteria" id="AAK25483">
    <property type="protein sequence ID" value="AAK25483"/>
    <property type="gene ID" value="CC_3521"/>
</dbReference>
<dbReference type="KEGG" id="ccr:CC_3521"/>
<dbReference type="PATRIC" id="fig|190650.5.peg.3529"/>
<dbReference type="eggNOG" id="COG0502">
    <property type="taxonomic scope" value="Bacteria"/>
</dbReference>
<dbReference type="HOGENOM" id="CLU_033172_1_2_5"/>
<dbReference type="BioCyc" id="CAULO:CC3521-MONOMER"/>
<dbReference type="UniPathway" id="UPA00078">
    <property type="reaction ID" value="UER00162"/>
</dbReference>
<dbReference type="Proteomes" id="UP000001816">
    <property type="component" value="Chromosome"/>
</dbReference>
<dbReference type="GO" id="GO:0051537">
    <property type="term" value="F:2 iron, 2 sulfur cluster binding"/>
    <property type="evidence" value="ECO:0007669"/>
    <property type="project" value="UniProtKB-KW"/>
</dbReference>
<dbReference type="GO" id="GO:0051539">
    <property type="term" value="F:4 iron, 4 sulfur cluster binding"/>
    <property type="evidence" value="ECO:0007669"/>
    <property type="project" value="UniProtKB-KW"/>
</dbReference>
<dbReference type="GO" id="GO:0004076">
    <property type="term" value="F:biotin synthase activity"/>
    <property type="evidence" value="ECO:0007669"/>
    <property type="project" value="UniProtKB-UniRule"/>
</dbReference>
<dbReference type="GO" id="GO:0005506">
    <property type="term" value="F:iron ion binding"/>
    <property type="evidence" value="ECO:0007669"/>
    <property type="project" value="UniProtKB-UniRule"/>
</dbReference>
<dbReference type="GO" id="GO:0009102">
    <property type="term" value="P:biotin biosynthetic process"/>
    <property type="evidence" value="ECO:0007669"/>
    <property type="project" value="UniProtKB-UniRule"/>
</dbReference>
<dbReference type="CDD" id="cd01335">
    <property type="entry name" value="Radical_SAM"/>
    <property type="match status" value="1"/>
</dbReference>
<dbReference type="FunFam" id="3.20.20.70:FF:000011">
    <property type="entry name" value="Biotin synthase"/>
    <property type="match status" value="1"/>
</dbReference>
<dbReference type="Gene3D" id="3.20.20.70">
    <property type="entry name" value="Aldolase class I"/>
    <property type="match status" value="1"/>
</dbReference>
<dbReference type="HAMAP" id="MF_01694">
    <property type="entry name" value="BioB"/>
    <property type="match status" value="1"/>
</dbReference>
<dbReference type="InterPro" id="IPR013785">
    <property type="entry name" value="Aldolase_TIM"/>
</dbReference>
<dbReference type="InterPro" id="IPR010722">
    <property type="entry name" value="BATS_dom"/>
</dbReference>
<dbReference type="InterPro" id="IPR002684">
    <property type="entry name" value="Biotin_synth/BioAB"/>
</dbReference>
<dbReference type="InterPro" id="IPR024177">
    <property type="entry name" value="Biotin_synthase"/>
</dbReference>
<dbReference type="InterPro" id="IPR006638">
    <property type="entry name" value="Elp3/MiaA/NifB-like_rSAM"/>
</dbReference>
<dbReference type="InterPro" id="IPR007197">
    <property type="entry name" value="rSAM"/>
</dbReference>
<dbReference type="NCBIfam" id="TIGR00433">
    <property type="entry name" value="bioB"/>
    <property type="match status" value="1"/>
</dbReference>
<dbReference type="PANTHER" id="PTHR22976">
    <property type="entry name" value="BIOTIN SYNTHASE"/>
    <property type="match status" value="1"/>
</dbReference>
<dbReference type="PANTHER" id="PTHR22976:SF2">
    <property type="entry name" value="BIOTIN SYNTHASE, MITOCHONDRIAL"/>
    <property type="match status" value="1"/>
</dbReference>
<dbReference type="Pfam" id="PF06968">
    <property type="entry name" value="BATS"/>
    <property type="match status" value="1"/>
</dbReference>
<dbReference type="Pfam" id="PF04055">
    <property type="entry name" value="Radical_SAM"/>
    <property type="match status" value="1"/>
</dbReference>
<dbReference type="PIRSF" id="PIRSF001619">
    <property type="entry name" value="Biotin_synth"/>
    <property type="match status" value="1"/>
</dbReference>
<dbReference type="SFLD" id="SFLDF00272">
    <property type="entry name" value="biotin_synthase"/>
    <property type="match status" value="1"/>
</dbReference>
<dbReference type="SFLD" id="SFLDS00029">
    <property type="entry name" value="Radical_SAM"/>
    <property type="match status" value="1"/>
</dbReference>
<dbReference type="SMART" id="SM00876">
    <property type="entry name" value="BATS"/>
    <property type="match status" value="1"/>
</dbReference>
<dbReference type="SMART" id="SM00729">
    <property type="entry name" value="Elp3"/>
    <property type="match status" value="1"/>
</dbReference>
<dbReference type="SUPFAM" id="SSF102114">
    <property type="entry name" value="Radical SAM enzymes"/>
    <property type="match status" value="1"/>
</dbReference>
<dbReference type="PROSITE" id="PS51918">
    <property type="entry name" value="RADICAL_SAM"/>
    <property type="match status" value="1"/>
</dbReference>
<evidence type="ECO:0000255" key="1">
    <source>
        <dbReference type="HAMAP-Rule" id="MF_01694"/>
    </source>
</evidence>
<evidence type="ECO:0000255" key="2">
    <source>
        <dbReference type="PROSITE-ProRule" id="PRU01266"/>
    </source>
</evidence>
<accession>Q9A2N5</accession>
<keyword id="KW-0001">2Fe-2S</keyword>
<keyword id="KW-0004">4Fe-4S</keyword>
<keyword id="KW-0093">Biotin biosynthesis</keyword>
<keyword id="KW-0408">Iron</keyword>
<keyword id="KW-0411">Iron-sulfur</keyword>
<keyword id="KW-0479">Metal-binding</keyword>
<keyword id="KW-1185">Reference proteome</keyword>
<keyword id="KW-0949">S-adenosyl-L-methionine</keyword>
<keyword id="KW-0808">Transferase</keyword>
<organism>
    <name type="scientific">Caulobacter vibrioides (strain ATCC 19089 / CIP 103742 / CB 15)</name>
    <name type="common">Caulobacter crescentus</name>
    <dbReference type="NCBI Taxonomy" id="190650"/>
    <lineage>
        <taxon>Bacteria</taxon>
        <taxon>Pseudomonadati</taxon>
        <taxon>Pseudomonadota</taxon>
        <taxon>Alphaproteobacteria</taxon>
        <taxon>Caulobacterales</taxon>
        <taxon>Caulobacteraceae</taxon>
        <taxon>Caulobacter</taxon>
    </lineage>
</organism>